<evidence type="ECO:0000250" key="1"/>
<evidence type="ECO:0000305" key="2"/>
<dbReference type="PIR" id="E44583">
    <property type="entry name" value="E44583"/>
</dbReference>
<dbReference type="SMR" id="P35787"/>
<dbReference type="Allergome" id="3524">
    <property type="allergen name" value="Ves vi 5.0101"/>
</dbReference>
<dbReference type="Allergome" id="671">
    <property type="allergen name" value="Ves vi 5"/>
</dbReference>
<dbReference type="GO" id="GO:0005576">
    <property type="term" value="C:extracellular region"/>
    <property type="evidence" value="ECO:0007669"/>
    <property type="project" value="UniProtKB-SubCell"/>
</dbReference>
<dbReference type="CDD" id="cd05380">
    <property type="entry name" value="CAP_euk"/>
    <property type="match status" value="1"/>
</dbReference>
<dbReference type="Gene3D" id="3.40.33.10">
    <property type="entry name" value="CAP"/>
    <property type="match status" value="1"/>
</dbReference>
<dbReference type="InterPro" id="IPR018244">
    <property type="entry name" value="Allrgn_V5/Tpx1_CS"/>
</dbReference>
<dbReference type="InterPro" id="IPR014044">
    <property type="entry name" value="CAP_dom"/>
</dbReference>
<dbReference type="InterPro" id="IPR035940">
    <property type="entry name" value="CAP_sf"/>
</dbReference>
<dbReference type="InterPro" id="IPR001283">
    <property type="entry name" value="CRISP-related"/>
</dbReference>
<dbReference type="InterPro" id="IPR002413">
    <property type="entry name" value="V5_allergen-like"/>
</dbReference>
<dbReference type="PANTHER" id="PTHR10334">
    <property type="entry name" value="CYSTEINE-RICH SECRETORY PROTEIN-RELATED"/>
    <property type="match status" value="1"/>
</dbReference>
<dbReference type="Pfam" id="PF00188">
    <property type="entry name" value="CAP"/>
    <property type="match status" value="1"/>
</dbReference>
<dbReference type="PRINTS" id="PR00838">
    <property type="entry name" value="V5ALLERGEN"/>
</dbReference>
<dbReference type="PRINTS" id="PR00837">
    <property type="entry name" value="V5TPXLIKE"/>
</dbReference>
<dbReference type="SMART" id="SM00198">
    <property type="entry name" value="SCP"/>
    <property type="match status" value="1"/>
</dbReference>
<dbReference type="SUPFAM" id="SSF55797">
    <property type="entry name" value="PR-1-like"/>
    <property type="match status" value="1"/>
</dbReference>
<dbReference type="PROSITE" id="PS01009">
    <property type="entry name" value="CRISP_1"/>
    <property type="match status" value="1"/>
</dbReference>
<dbReference type="PROSITE" id="PS01010">
    <property type="entry name" value="CRISP_2"/>
    <property type="match status" value="1"/>
</dbReference>
<comment type="subcellular location">
    <subcellularLocation>
        <location>Secreted</location>
    </subcellularLocation>
</comment>
<comment type="tissue specificity">
    <text>Expressed by the venom gland.</text>
</comment>
<comment type="allergen">
    <text>Causes an allergic reaction in human.</text>
</comment>
<comment type="similarity">
    <text evidence="2">Belongs to the CRISP family. Venom allergen 5-like subfamily.</text>
</comment>
<feature type="chain" id="PRO_0000211547" description="Venom allergen 5">
    <location>
        <begin position="1"/>
        <end position="206"/>
    </location>
</feature>
<feature type="domain" description="SCP">
    <location>
        <begin position="47"/>
        <end position="191"/>
    </location>
</feature>
<feature type="disulfide bond" evidence="1">
    <location>
        <begin position="5"/>
        <end position="18"/>
    </location>
</feature>
<feature type="disulfide bond" evidence="1">
    <location>
        <begin position="9"/>
        <end position="103"/>
    </location>
</feature>
<feature type="disulfide bond" evidence="1">
    <location>
        <begin position="28"/>
        <end position="96"/>
    </location>
</feature>
<feature type="disulfide bond" evidence="1">
    <location>
        <begin position="172"/>
        <end position="189"/>
    </location>
</feature>
<reference key="1">
    <citation type="journal article" date="1993" name="J. Allergy Clin. Immunol.">
        <title>Allergens in Hymenoptera venom. XXV: the amino acid sequences of antigen 5 molecules and the structural basis of antigenic cross-reactivity.</title>
        <authorList>
            <person name="Hoffman D.R."/>
        </authorList>
    </citation>
    <scope>PROTEIN SEQUENCE</scope>
    <source>
        <tissue>Venom</tissue>
    </source>
</reference>
<organism>
    <name type="scientific">Vespula vidua</name>
    <name type="common">Ground hornet</name>
    <dbReference type="NCBI Taxonomy" id="30215"/>
    <lineage>
        <taxon>Eukaryota</taxon>
        <taxon>Metazoa</taxon>
        <taxon>Ecdysozoa</taxon>
        <taxon>Arthropoda</taxon>
        <taxon>Hexapoda</taxon>
        <taxon>Insecta</taxon>
        <taxon>Pterygota</taxon>
        <taxon>Neoptera</taxon>
        <taxon>Endopterygota</taxon>
        <taxon>Hymenoptera</taxon>
        <taxon>Apocrita</taxon>
        <taxon>Aculeata</taxon>
        <taxon>Vespoidea</taxon>
        <taxon>Vespidae</taxon>
        <taxon>Vespinae</taxon>
        <taxon>Vespula</taxon>
    </lineage>
</organism>
<sequence length="206" mass="23420">KVNYCKIKCLKGGVHTACKYGTSTKPNCGKMVVKAYGLTEAEKQEILKVHNDFRQKVAKGLETRGNPGPQPPAKNMNNLVWNDELANIAQVWASQCNYGHDTCKDTEKYPVGQNIAKRSTTAALFDSPGKLVKMWENEVKDFNPNIEWSKNNLKKTGHYTQMVWAKTKEIGCGSVKYVKDEWYTHYLVCNYGPSGNFRNEKLYEKK</sequence>
<accession>P35787</accession>
<proteinExistence type="evidence at protein level"/>
<protein>
    <recommendedName>
        <fullName>Venom allergen 5</fullName>
    </recommendedName>
    <alternativeName>
        <fullName>Allergen Ves vi V</fullName>
    </alternativeName>
    <alternativeName>
        <fullName>Antigen 5</fullName>
        <shortName>Ag5</shortName>
    </alternativeName>
    <alternativeName>
        <fullName>Cysteine-rich venom protein</fullName>
        <shortName>CRVP</shortName>
    </alternativeName>
    <allergenName>Ves vi 5</allergenName>
</protein>
<name>VA5_VESVI</name>
<keyword id="KW-0020">Allergen</keyword>
<keyword id="KW-0903">Direct protein sequencing</keyword>
<keyword id="KW-1015">Disulfide bond</keyword>
<keyword id="KW-0964">Secreted</keyword>